<reference key="1">
    <citation type="journal article" date="2007" name="J. Bacteriol.">
        <title>Genome sequence of Avery's virulent serotype 2 strain D39 of Streptococcus pneumoniae and comparison with that of unencapsulated laboratory strain R6.</title>
        <authorList>
            <person name="Lanie J.A."/>
            <person name="Ng W.-L."/>
            <person name="Kazmierczak K.M."/>
            <person name="Andrzejewski T.M."/>
            <person name="Davidsen T.M."/>
            <person name="Wayne K.J."/>
            <person name="Tettelin H."/>
            <person name="Glass J.I."/>
            <person name="Winkler M.E."/>
        </authorList>
    </citation>
    <scope>NUCLEOTIDE SEQUENCE [LARGE SCALE GENOMIC DNA]</scope>
    <source>
        <strain>D39 / NCTC 7466</strain>
    </source>
</reference>
<keyword id="KW-0342">GTP-binding</keyword>
<keyword id="KW-0547">Nucleotide-binding</keyword>
<keyword id="KW-1185">Reference proteome</keyword>
<keyword id="KW-0677">Repeat</keyword>
<keyword id="KW-0690">Ribosome biogenesis</keyword>
<organism>
    <name type="scientific">Streptococcus pneumoniae serotype 2 (strain D39 / NCTC 7466)</name>
    <dbReference type="NCBI Taxonomy" id="373153"/>
    <lineage>
        <taxon>Bacteria</taxon>
        <taxon>Bacillati</taxon>
        <taxon>Bacillota</taxon>
        <taxon>Bacilli</taxon>
        <taxon>Lactobacillales</taxon>
        <taxon>Streptococcaceae</taxon>
        <taxon>Streptococcus</taxon>
    </lineage>
</organism>
<comment type="function">
    <text evidence="1">GTPase that plays an essential role in the late steps of ribosome biogenesis.</text>
</comment>
<comment type="subunit">
    <text evidence="1">Associates with the 50S ribosomal subunit.</text>
</comment>
<comment type="similarity">
    <text evidence="1">Belongs to the TRAFAC class TrmE-Era-EngA-EngB-Septin-like GTPase superfamily. EngA (Der) GTPase family.</text>
</comment>
<gene>
    <name evidence="1" type="primary">der</name>
    <name type="synonym">engA</name>
    <name type="ordered locus">SPD_1519</name>
</gene>
<name>DER_STRP2</name>
<protein>
    <recommendedName>
        <fullName evidence="1">GTPase Der</fullName>
    </recommendedName>
    <alternativeName>
        <fullName evidence="1">GTP-binding protein EngA</fullName>
    </alternativeName>
</protein>
<sequence>MALPTIAIVGRPNVGKSTLFNRIAGERISIVEDVEGVTRDRIYATGEWLNRSFSMIDTGGIDDVDAPFMEQIKHQAEIAMEEADVIVFVVSGKEGITDADEYVARKLYKTHKPVILAVNKVDNPEMRNDIYDFYALGLGEPLPISSVHGIGTGDVLDAIVENLPNEYEEENPDVIKFSLIGRPNVGKSSLINAILGEDRVIASPVAGTTRDAIDTHFTDTDGQEFTMIDTAGMRKSGKVYENTEKYSVMRAMRAIDRSDVVLMVINAEEGIREYDKRIAGFAHEAGKGMIIVVNKWDTLEKDNHTMKNWEEDIREQFQYLPYAPIIFVSALTKQRLHKLPEMIKQISESQNTRIPSAVLNDVIMDAIAINPTPTDKGKRLKIFYATQVATKPPTFVIFVNEEELMHFSYLRFLENQIRKAFVFEGTPIHLIARKRK</sequence>
<proteinExistence type="inferred from homology"/>
<evidence type="ECO:0000255" key="1">
    <source>
        <dbReference type="HAMAP-Rule" id="MF_00195"/>
    </source>
</evidence>
<accession>Q04J64</accession>
<dbReference type="EMBL" id="CP000410">
    <property type="protein sequence ID" value="ABJ54175.1"/>
    <property type="molecule type" value="Genomic_DNA"/>
</dbReference>
<dbReference type="RefSeq" id="WP_001207696.1">
    <property type="nucleotide sequence ID" value="NZ_JAMLJR010000003.1"/>
</dbReference>
<dbReference type="SMR" id="Q04J64"/>
<dbReference type="PaxDb" id="373153-SPD_1519"/>
<dbReference type="GeneID" id="93740105"/>
<dbReference type="KEGG" id="spd:SPD_1519"/>
<dbReference type="eggNOG" id="COG1160">
    <property type="taxonomic scope" value="Bacteria"/>
</dbReference>
<dbReference type="HOGENOM" id="CLU_016077_6_2_9"/>
<dbReference type="BioCyc" id="SPNE373153:G1G6V-1641-MONOMER"/>
<dbReference type="Proteomes" id="UP000001452">
    <property type="component" value="Chromosome"/>
</dbReference>
<dbReference type="GO" id="GO:0005525">
    <property type="term" value="F:GTP binding"/>
    <property type="evidence" value="ECO:0007669"/>
    <property type="project" value="UniProtKB-UniRule"/>
</dbReference>
<dbReference type="GO" id="GO:0043022">
    <property type="term" value="F:ribosome binding"/>
    <property type="evidence" value="ECO:0007669"/>
    <property type="project" value="TreeGrafter"/>
</dbReference>
<dbReference type="GO" id="GO:0042254">
    <property type="term" value="P:ribosome biogenesis"/>
    <property type="evidence" value="ECO:0007669"/>
    <property type="project" value="UniProtKB-KW"/>
</dbReference>
<dbReference type="CDD" id="cd01894">
    <property type="entry name" value="EngA1"/>
    <property type="match status" value="1"/>
</dbReference>
<dbReference type="CDD" id="cd01895">
    <property type="entry name" value="EngA2"/>
    <property type="match status" value="1"/>
</dbReference>
<dbReference type="FunFam" id="3.30.300.20:FF:000004">
    <property type="entry name" value="GTPase Der"/>
    <property type="match status" value="1"/>
</dbReference>
<dbReference type="FunFam" id="3.40.50.300:FF:000040">
    <property type="entry name" value="GTPase Der"/>
    <property type="match status" value="1"/>
</dbReference>
<dbReference type="FunFam" id="3.40.50.300:FF:000057">
    <property type="entry name" value="GTPase Der"/>
    <property type="match status" value="1"/>
</dbReference>
<dbReference type="Gene3D" id="3.30.300.20">
    <property type="match status" value="1"/>
</dbReference>
<dbReference type="Gene3D" id="3.40.50.300">
    <property type="entry name" value="P-loop containing nucleotide triphosphate hydrolases"/>
    <property type="match status" value="2"/>
</dbReference>
<dbReference type="HAMAP" id="MF_00195">
    <property type="entry name" value="GTPase_Der"/>
    <property type="match status" value="1"/>
</dbReference>
<dbReference type="InterPro" id="IPR031166">
    <property type="entry name" value="G_ENGA"/>
</dbReference>
<dbReference type="InterPro" id="IPR006073">
    <property type="entry name" value="GTP-bd"/>
</dbReference>
<dbReference type="InterPro" id="IPR016484">
    <property type="entry name" value="GTPase_Der"/>
</dbReference>
<dbReference type="InterPro" id="IPR032859">
    <property type="entry name" value="KH_dom-like"/>
</dbReference>
<dbReference type="InterPro" id="IPR015946">
    <property type="entry name" value="KH_dom-like_a/b"/>
</dbReference>
<dbReference type="InterPro" id="IPR027417">
    <property type="entry name" value="P-loop_NTPase"/>
</dbReference>
<dbReference type="InterPro" id="IPR005225">
    <property type="entry name" value="Small_GTP-bd"/>
</dbReference>
<dbReference type="NCBIfam" id="TIGR03594">
    <property type="entry name" value="GTPase_EngA"/>
    <property type="match status" value="1"/>
</dbReference>
<dbReference type="NCBIfam" id="TIGR00231">
    <property type="entry name" value="small_GTP"/>
    <property type="match status" value="2"/>
</dbReference>
<dbReference type="PANTHER" id="PTHR43834">
    <property type="entry name" value="GTPASE DER"/>
    <property type="match status" value="1"/>
</dbReference>
<dbReference type="PANTHER" id="PTHR43834:SF6">
    <property type="entry name" value="GTPASE DER"/>
    <property type="match status" value="1"/>
</dbReference>
<dbReference type="Pfam" id="PF14714">
    <property type="entry name" value="KH_dom-like"/>
    <property type="match status" value="1"/>
</dbReference>
<dbReference type="Pfam" id="PF01926">
    <property type="entry name" value="MMR_HSR1"/>
    <property type="match status" value="2"/>
</dbReference>
<dbReference type="PIRSF" id="PIRSF006485">
    <property type="entry name" value="GTP-binding_EngA"/>
    <property type="match status" value="1"/>
</dbReference>
<dbReference type="PRINTS" id="PR00326">
    <property type="entry name" value="GTP1OBG"/>
</dbReference>
<dbReference type="SUPFAM" id="SSF52540">
    <property type="entry name" value="P-loop containing nucleoside triphosphate hydrolases"/>
    <property type="match status" value="2"/>
</dbReference>
<dbReference type="PROSITE" id="PS51712">
    <property type="entry name" value="G_ENGA"/>
    <property type="match status" value="2"/>
</dbReference>
<feature type="chain" id="PRO_1000011752" description="GTPase Der">
    <location>
        <begin position="1"/>
        <end position="436"/>
    </location>
</feature>
<feature type="domain" description="EngA-type G 1">
    <location>
        <begin position="4"/>
        <end position="167"/>
    </location>
</feature>
<feature type="domain" description="EngA-type G 2">
    <location>
        <begin position="175"/>
        <end position="351"/>
    </location>
</feature>
<feature type="domain" description="KH-like" evidence="1">
    <location>
        <begin position="352"/>
        <end position="436"/>
    </location>
</feature>
<feature type="binding site" evidence="1">
    <location>
        <begin position="10"/>
        <end position="17"/>
    </location>
    <ligand>
        <name>GTP</name>
        <dbReference type="ChEBI" id="CHEBI:37565"/>
        <label>1</label>
    </ligand>
</feature>
<feature type="binding site" evidence="1">
    <location>
        <begin position="57"/>
        <end position="61"/>
    </location>
    <ligand>
        <name>GTP</name>
        <dbReference type="ChEBI" id="CHEBI:37565"/>
        <label>1</label>
    </ligand>
</feature>
<feature type="binding site" evidence="1">
    <location>
        <begin position="119"/>
        <end position="122"/>
    </location>
    <ligand>
        <name>GTP</name>
        <dbReference type="ChEBI" id="CHEBI:37565"/>
        <label>1</label>
    </ligand>
</feature>
<feature type="binding site" evidence="1">
    <location>
        <begin position="181"/>
        <end position="188"/>
    </location>
    <ligand>
        <name>GTP</name>
        <dbReference type="ChEBI" id="CHEBI:37565"/>
        <label>2</label>
    </ligand>
</feature>
<feature type="binding site" evidence="1">
    <location>
        <begin position="229"/>
        <end position="233"/>
    </location>
    <ligand>
        <name>GTP</name>
        <dbReference type="ChEBI" id="CHEBI:37565"/>
        <label>2</label>
    </ligand>
</feature>
<feature type="binding site" evidence="1">
    <location>
        <begin position="294"/>
        <end position="297"/>
    </location>
    <ligand>
        <name>GTP</name>
        <dbReference type="ChEBI" id="CHEBI:37565"/>
        <label>2</label>
    </ligand>
</feature>